<protein>
    <recommendedName>
        <fullName>ATP synthase subunit epsilon, mitochondrial</fullName>
        <shortName>ATPase subunit epsilon</shortName>
    </recommendedName>
</protein>
<organism>
    <name type="scientific">Zea mays</name>
    <name type="common">Maize</name>
    <dbReference type="NCBI Taxonomy" id="4577"/>
    <lineage>
        <taxon>Eukaryota</taxon>
        <taxon>Viridiplantae</taxon>
        <taxon>Streptophyta</taxon>
        <taxon>Embryophyta</taxon>
        <taxon>Tracheophyta</taxon>
        <taxon>Spermatophyta</taxon>
        <taxon>Magnoliopsida</taxon>
        <taxon>Liliopsida</taxon>
        <taxon>Poales</taxon>
        <taxon>Poaceae</taxon>
        <taxon>PACMAD clade</taxon>
        <taxon>Panicoideae</taxon>
        <taxon>Andropogonodae</taxon>
        <taxon>Andropogoneae</taxon>
        <taxon>Tripsacinae</taxon>
        <taxon>Zea</taxon>
    </lineage>
</organism>
<reference key="1">
    <citation type="online journal article" date="1995" name="Plant Gene Register">
        <title>Nucleotide sequence of a maize mitochondrial F1F0 ATP synthase epsilon subunit cDNA.</title>
        <authorList>
            <person name="Li C.P."/>
            <person name="Larkins B.A."/>
        </authorList>
        <locator>PGR95-059</locator>
    </citation>
    <scope>NUCLEOTIDE SEQUENCE [MRNA]</scope>
    <source>
        <strain>cv. Wisconsin 64A</strain>
        <tissue>Endosperm</tissue>
    </source>
</reference>
<comment type="function">
    <text>Mitochondrial membrane ATP synthase (F(1)F(0) ATP synthase or Complex V) produces ATP from ADP in the presence of a proton gradient across the membrane which is generated by electron transport complexes of the respiratory chain. F-type ATPases consist of two structural domains, F(1) - containing the extramembraneous catalytic core, and F(0) - containing the membrane proton channel, linked together by a central stalk and a peripheral stalk. During catalysis, ATP synthesis in the catalytic domain of F(1) is coupled via a rotary mechanism of the central stalk subunits to proton translocation. Part of the complex F(1) domain and of the central stalk which is part of the complex rotary element. Rotation of the central stalk against the surrounding alpha(3)beta(3) subunits leads to hydrolysis of ATP in three separate catalytic sites on the beta subunits.</text>
</comment>
<comment type="subunit">
    <text>F-type ATPases have 2 components, CF(1) - the catalytic core - and CF(0) - the membrane proton channel. CF(1) has five subunits: alpha(3), beta(3), gamma(1), delta(1), epsilon(1). CF(0) has three main subunits: a, b and c.</text>
</comment>
<comment type="subcellular location">
    <subcellularLocation>
        <location>Mitochondrion</location>
    </subcellularLocation>
    <subcellularLocation>
        <location>Mitochondrion inner membrane</location>
    </subcellularLocation>
</comment>
<comment type="similarity">
    <text evidence="1">Belongs to the eukaryotic ATPase epsilon family.</text>
</comment>
<accession>Q41898</accession>
<proteinExistence type="inferred from homology"/>
<name>ATP5E_MAIZE</name>
<sequence length="70" mass="7786">MSATTAAVPFWRAAGMTYIGYSNICAALVRNCLKEPFKSEAASREKVHFSISKWTDGKQEKPTVRTESDD</sequence>
<dbReference type="EMBL" id="L39120">
    <property type="protein sequence ID" value="AAA86819.1"/>
    <property type="molecule type" value="mRNA"/>
</dbReference>
<dbReference type="PIR" id="T04387">
    <property type="entry name" value="T04387"/>
</dbReference>
<dbReference type="RefSeq" id="NP_001105595.1">
    <property type="nucleotide sequence ID" value="NM_001112125.2"/>
</dbReference>
<dbReference type="SMR" id="Q41898"/>
<dbReference type="FunCoup" id="Q41898">
    <property type="interactions" value="1258"/>
</dbReference>
<dbReference type="STRING" id="4577.Q41898"/>
<dbReference type="PaxDb" id="4577-GRMZM2G157758_P01"/>
<dbReference type="EnsemblPlants" id="Zm00001eb357940_T001">
    <property type="protein sequence ID" value="Zm00001eb357940_P001"/>
    <property type="gene ID" value="Zm00001eb357940"/>
</dbReference>
<dbReference type="GeneID" id="542589"/>
<dbReference type="Gramene" id="Zm00001eb357940_T001">
    <property type="protein sequence ID" value="Zm00001eb357940_P001"/>
    <property type="gene ID" value="Zm00001eb357940"/>
</dbReference>
<dbReference type="KEGG" id="zma:542589"/>
<dbReference type="eggNOG" id="KOG3495">
    <property type="taxonomic scope" value="Eukaryota"/>
</dbReference>
<dbReference type="InParanoid" id="Q41898"/>
<dbReference type="OrthoDB" id="269124at2759"/>
<dbReference type="Proteomes" id="UP000007305">
    <property type="component" value="Chromosome 8"/>
</dbReference>
<dbReference type="ExpressionAtlas" id="Q41898">
    <property type="expression patterns" value="baseline and differential"/>
</dbReference>
<dbReference type="GO" id="GO:0005743">
    <property type="term" value="C:mitochondrial inner membrane"/>
    <property type="evidence" value="ECO:0000318"/>
    <property type="project" value="GO_Central"/>
</dbReference>
<dbReference type="GO" id="GO:0045259">
    <property type="term" value="C:proton-transporting ATP synthase complex"/>
    <property type="evidence" value="ECO:0007669"/>
    <property type="project" value="UniProtKB-KW"/>
</dbReference>
<dbReference type="GO" id="GO:0046933">
    <property type="term" value="F:proton-transporting ATP synthase activity, rotational mechanism"/>
    <property type="evidence" value="ECO:0007669"/>
    <property type="project" value="InterPro"/>
</dbReference>
<dbReference type="GO" id="GO:0042776">
    <property type="term" value="P:proton motive force-driven mitochondrial ATP synthesis"/>
    <property type="evidence" value="ECO:0000318"/>
    <property type="project" value="GO_Central"/>
</dbReference>
<dbReference type="CDD" id="cd12153">
    <property type="entry name" value="F1-ATPase_epsilon"/>
    <property type="match status" value="1"/>
</dbReference>
<dbReference type="FunFam" id="1.10.1620.20:FF:000002">
    <property type="entry name" value="ATP synthase subunit epsilon, mitochondrial"/>
    <property type="match status" value="1"/>
</dbReference>
<dbReference type="Gene3D" id="1.10.1620.20">
    <property type="entry name" value="ATP synthase, F1 complex, epsilon subunit superfamily, mitochondrial"/>
    <property type="match status" value="1"/>
</dbReference>
<dbReference type="InterPro" id="IPR006721">
    <property type="entry name" value="ATP_synth_F1_esu_mt"/>
</dbReference>
<dbReference type="InterPro" id="IPR036742">
    <property type="entry name" value="ATP_synth_F1_esu_sf_mt"/>
</dbReference>
<dbReference type="PANTHER" id="PTHR12448">
    <property type="entry name" value="ATP SYNTHASE EPSILON CHAIN, MITOCHONDRIAL"/>
    <property type="match status" value="1"/>
</dbReference>
<dbReference type="PANTHER" id="PTHR12448:SF0">
    <property type="entry name" value="ATP SYNTHASE SUBUNIT EPSILON, MITOCHONDRIAL"/>
    <property type="match status" value="1"/>
</dbReference>
<dbReference type="Pfam" id="PF04627">
    <property type="entry name" value="ATP-synt_Eps"/>
    <property type="match status" value="1"/>
</dbReference>
<dbReference type="SUPFAM" id="SSF48690">
    <property type="entry name" value="Epsilon subunit of mitochondrial F1F0-ATP synthase"/>
    <property type="match status" value="1"/>
</dbReference>
<keyword id="KW-0066">ATP synthesis</keyword>
<keyword id="KW-0139">CF(1)</keyword>
<keyword id="KW-0375">Hydrogen ion transport</keyword>
<keyword id="KW-0406">Ion transport</keyword>
<keyword id="KW-0472">Membrane</keyword>
<keyword id="KW-0496">Mitochondrion</keyword>
<keyword id="KW-0999">Mitochondrion inner membrane</keyword>
<keyword id="KW-1185">Reference proteome</keyword>
<keyword id="KW-0813">Transport</keyword>
<evidence type="ECO:0000305" key="1"/>
<feature type="chain" id="PRO_0000071670" description="ATP synthase subunit epsilon, mitochondrial">
    <location>
        <begin position="1"/>
        <end position="70"/>
    </location>
</feature>